<sequence>MPYYWGAILIGGVFLAGCTQNQETTTTQSGSKENVIKVGLLVDLSGGLATYGNNEKHICEIAEEKINKYFEEKGMPYKVKLYVEDTRADPNICLQKVQALHAQGITFFLGPMASGEVKNIKGFINSNKIVIISPSSTAPPQMLGFRTPEEKKYVFRFVPTDNFQGNAIGDVAKQLGLKNVIVIYRKDAWGDGLERATVEKLKANGINIIDEIPYDPNIGDWSPIIQTTTNKIAGKGNDTGVIFIGYEEVATLLSQIDDNSPLLKHVWIGCDGTANSKKVLEEAKNKAVKVKLYSTMFQSETDEAEKIKEEFKKRGYGEPDQYALNVYDAFWVGAISYAEMLNKTGGKYDADLLSKLIKENTVKYSEGQFGVKSVTGYIKLNEWNDRASGNYGIFAVTEDGWKLVGVWDSTTGKINWK</sequence>
<evidence type="ECO:0000255" key="1"/>
<dbReference type="EMBL" id="L77117">
    <property type="protein sequence ID" value="AAB99272.1"/>
    <property type="molecule type" value="Genomic_DNA"/>
</dbReference>
<dbReference type="PIR" id="A64458">
    <property type="entry name" value="A64458"/>
</dbReference>
<dbReference type="RefSeq" id="WP_010870779.1">
    <property type="nucleotide sequence ID" value="NC_000909.1"/>
</dbReference>
<dbReference type="SMR" id="Q58662"/>
<dbReference type="FunCoup" id="Q58662">
    <property type="interactions" value="10"/>
</dbReference>
<dbReference type="STRING" id="243232.MJ_1266"/>
<dbReference type="PaxDb" id="243232-MJ_1266"/>
<dbReference type="EnsemblBacteria" id="AAB99272">
    <property type="protein sequence ID" value="AAB99272"/>
    <property type="gene ID" value="MJ_1266"/>
</dbReference>
<dbReference type="GeneID" id="1452164"/>
<dbReference type="KEGG" id="mja:MJ_1266"/>
<dbReference type="eggNOG" id="arCOG01021">
    <property type="taxonomic scope" value="Archaea"/>
</dbReference>
<dbReference type="HOGENOM" id="CLU_027128_5_1_2"/>
<dbReference type="InParanoid" id="Q58662"/>
<dbReference type="OrthoDB" id="21336at2157"/>
<dbReference type="PhylomeDB" id="Q58662"/>
<dbReference type="Proteomes" id="UP000000805">
    <property type="component" value="Chromosome"/>
</dbReference>
<dbReference type="CDD" id="cd06346">
    <property type="entry name" value="PBP1_ABC_ligand_binding-like"/>
    <property type="match status" value="1"/>
</dbReference>
<dbReference type="Gene3D" id="3.40.50.2300">
    <property type="match status" value="2"/>
</dbReference>
<dbReference type="InterPro" id="IPR051010">
    <property type="entry name" value="BCAA_transport"/>
</dbReference>
<dbReference type="InterPro" id="IPR028081">
    <property type="entry name" value="Leu-bd"/>
</dbReference>
<dbReference type="InterPro" id="IPR028082">
    <property type="entry name" value="Peripla_BP_I"/>
</dbReference>
<dbReference type="PANTHER" id="PTHR30483:SF40">
    <property type="entry name" value="HISTIDINE KINASE"/>
    <property type="match status" value="1"/>
</dbReference>
<dbReference type="PANTHER" id="PTHR30483">
    <property type="entry name" value="LEUCINE-SPECIFIC-BINDING PROTEIN"/>
    <property type="match status" value="1"/>
</dbReference>
<dbReference type="Pfam" id="PF13458">
    <property type="entry name" value="Peripla_BP_6"/>
    <property type="match status" value="1"/>
</dbReference>
<dbReference type="SUPFAM" id="SSF53822">
    <property type="entry name" value="Periplasmic binding protein-like I"/>
    <property type="match status" value="1"/>
</dbReference>
<protein>
    <recommendedName>
        <fullName>Uncharacterized protein MJ1266</fullName>
    </recommendedName>
</protein>
<name>Y1266_METJA</name>
<organism>
    <name type="scientific">Methanocaldococcus jannaschii (strain ATCC 43067 / DSM 2661 / JAL-1 / JCM 10045 / NBRC 100440)</name>
    <name type="common">Methanococcus jannaschii</name>
    <dbReference type="NCBI Taxonomy" id="243232"/>
    <lineage>
        <taxon>Archaea</taxon>
        <taxon>Methanobacteriati</taxon>
        <taxon>Methanobacteriota</taxon>
        <taxon>Methanomada group</taxon>
        <taxon>Methanococci</taxon>
        <taxon>Methanococcales</taxon>
        <taxon>Methanocaldococcaceae</taxon>
        <taxon>Methanocaldococcus</taxon>
    </lineage>
</organism>
<gene>
    <name type="ordered locus">MJ1266</name>
</gene>
<accession>Q58662</accession>
<keyword id="KW-1185">Reference proteome</keyword>
<keyword id="KW-0732">Signal</keyword>
<proteinExistence type="inferred from homology"/>
<reference key="1">
    <citation type="journal article" date="1996" name="Science">
        <title>Complete genome sequence of the methanogenic archaeon, Methanococcus jannaschii.</title>
        <authorList>
            <person name="Bult C.J."/>
            <person name="White O."/>
            <person name="Olsen G.J."/>
            <person name="Zhou L."/>
            <person name="Fleischmann R.D."/>
            <person name="Sutton G.G."/>
            <person name="Blake J.A."/>
            <person name="FitzGerald L.M."/>
            <person name="Clayton R.A."/>
            <person name="Gocayne J.D."/>
            <person name="Kerlavage A.R."/>
            <person name="Dougherty B.A."/>
            <person name="Tomb J.-F."/>
            <person name="Adams M.D."/>
            <person name="Reich C.I."/>
            <person name="Overbeek R."/>
            <person name="Kirkness E.F."/>
            <person name="Weinstock K.G."/>
            <person name="Merrick J.M."/>
            <person name="Glodek A."/>
            <person name="Scott J.L."/>
            <person name="Geoghagen N.S.M."/>
            <person name="Weidman J.F."/>
            <person name="Fuhrmann J.L."/>
            <person name="Nguyen D."/>
            <person name="Utterback T.R."/>
            <person name="Kelley J.M."/>
            <person name="Peterson J.D."/>
            <person name="Sadow P.W."/>
            <person name="Hanna M.C."/>
            <person name="Cotton M.D."/>
            <person name="Roberts K.M."/>
            <person name="Hurst M.A."/>
            <person name="Kaine B.P."/>
            <person name="Borodovsky M."/>
            <person name="Klenk H.-P."/>
            <person name="Fraser C.M."/>
            <person name="Smith H.O."/>
            <person name="Woese C.R."/>
            <person name="Venter J.C."/>
        </authorList>
    </citation>
    <scope>NUCLEOTIDE SEQUENCE [LARGE SCALE GENOMIC DNA]</scope>
    <source>
        <strain>ATCC 43067 / DSM 2661 / JAL-1 / JCM 10045 / NBRC 100440</strain>
    </source>
</reference>
<feature type="signal peptide" evidence="1">
    <location>
        <begin position="1"/>
        <end position="21"/>
    </location>
</feature>
<feature type="chain" id="PRO_0000014010" description="Uncharacterized protein MJ1266">
    <location>
        <begin position="22"/>
        <end position="417"/>
    </location>
</feature>